<evidence type="ECO:0000255" key="1">
    <source>
        <dbReference type="HAMAP-Rule" id="MF_00736"/>
    </source>
</evidence>
<evidence type="ECO:0000305" key="2"/>
<accession>Q9PI35</accession>
<accession>Q0PB39</accession>
<sequence length="141" mass="15080">MAKKVVGEIKLQIAATKANPSPPVGPALGQQGVNIMEFCKAFNERTKDMAGFNIPVVITVYADKSFTFITKQPPATDLIKKAAGISKGTDNPLKNKVGKLTRAQVLEIVDKKIADLNTKDRDQAAKIIAGSARSMGVEIVD</sequence>
<dbReference type="EMBL" id="AL111168">
    <property type="protein sequence ID" value="CAL34622.1"/>
    <property type="molecule type" value="Genomic_DNA"/>
</dbReference>
<dbReference type="PIR" id="E81392">
    <property type="entry name" value="E81392"/>
</dbReference>
<dbReference type="RefSeq" id="WP_002779452.1">
    <property type="nucleotide sequence ID" value="NZ_SZUC01000002.1"/>
</dbReference>
<dbReference type="RefSeq" id="YP_002343908.1">
    <property type="nucleotide sequence ID" value="NC_002163.1"/>
</dbReference>
<dbReference type="SMR" id="Q9PI35"/>
<dbReference type="IntAct" id="Q9PI35">
    <property type="interactions" value="14"/>
</dbReference>
<dbReference type="STRING" id="192222.Cj0474"/>
<dbReference type="PaxDb" id="192222-Cj0474"/>
<dbReference type="EnsemblBacteria" id="CAL34622">
    <property type="protein sequence ID" value="CAL34622"/>
    <property type="gene ID" value="Cj0474"/>
</dbReference>
<dbReference type="GeneID" id="66544517"/>
<dbReference type="GeneID" id="904802"/>
<dbReference type="KEGG" id="cje:Cj0474"/>
<dbReference type="PATRIC" id="fig|192222.6.peg.466"/>
<dbReference type="eggNOG" id="COG0080">
    <property type="taxonomic scope" value="Bacteria"/>
</dbReference>
<dbReference type="HOGENOM" id="CLU_074237_2_0_7"/>
<dbReference type="OrthoDB" id="9802408at2"/>
<dbReference type="PRO" id="PR:Q9PI35"/>
<dbReference type="Proteomes" id="UP000000799">
    <property type="component" value="Chromosome"/>
</dbReference>
<dbReference type="GO" id="GO:0022625">
    <property type="term" value="C:cytosolic large ribosomal subunit"/>
    <property type="evidence" value="ECO:0007669"/>
    <property type="project" value="TreeGrafter"/>
</dbReference>
<dbReference type="GO" id="GO:0070180">
    <property type="term" value="F:large ribosomal subunit rRNA binding"/>
    <property type="evidence" value="ECO:0007669"/>
    <property type="project" value="UniProtKB-UniRule"/>
</dbReference>
<dbReference type="GO" id="GO:0003735">
    <property type="term" value="F:structural constituent of ribosome"/>
    <property type="evidence" value="ECO:0007669"/>
    <property type="project" value="InterPro"/>
</dbReference>
<dbReference type="GO" id="GO:0006412">
    <property type="term" value="P:translation"/>
    <property type="evidence" value="ECO:0007669"/>
    <property type="project" value="UniProtKB-UniRule"/>
</dbReference>
<dbReference type="CDD" id="cd00349">
    <property type="entry name" value="Ribosomal_L11"/>
    <property type="match status" value="1"/>
</dbReference>
<dbReference type="FunFam" id="1.10.10.250:FF:000001">
    <property type="entry name" value="50S ribosomal protein L11"/>
    <property type="match status" value="1"/>
</dbReference>
<dbReference type="FunFam" id="3.30.1550.10:FF:000001">
    <property type="entry name" value="50S ribosomal protein L11"/>
    <property type="match status" value="1"/>
</dbReference>
<dbReference type="Gene3D" id="1.10.10.250">
    <property type="entry name" value="Ribosomal protein L11, C-terminal domain"/>
    <property type="match status" value="1"/>
</dbReference>
<dbReference type="Gene3D" id="3.30.1550.10">
    <property type="entry name" value="Ribosomal protein L11/L12, N-terminal domain"/>
    <property type="match status" value="1"/>
</dbReference>
<dbReference type="HAMAP" id="MF_00736">
    <property type="entry name" value="Ribosomal_uL11"/>
    <property type="match status" value="1"/>
</dbReference>
<dbReference type="InterPro" id="IPR000911">
    <property type="entry name" value="Ribosomal_uL11"/>
</dbReference>
<dbReference type="InterPro" id="IPR006519">
    <property type="entry name" value="Ribosomal_uL11_bac-typ"/>
</dbReference>
<dbReference type="InterPro" id="IPR020783">
    <property type="entry name" value="Ribosomal_uL11_C"/>
</dbReference>
<dbReference type="InterPro" id="IPR036769">
    <property type="entry name" value="Ribosomal_uL11_C_sf"/>
</dbReference>
<dbReference type="InterPro" id="IPR020785">
    <property type="entry name" value="Ribosomal_uL11_CS"/>
</dbReference>
<dbReference type="InterPro" id="IPR020784">
    <property type="entry name" value="Ribosomal_uL11_N"/>
</dbReference>
<dbReference type="InterPro" id="IPR036796">
    <property type="entry name" value="Ribosomal_uL11_N_sf"/>
</dbReference>
<dbReference type="NCBIfam" id="TIGR01632">
    <property type="entry name" value="L11_bact"/>
    <property type="match status" value="1"/>
</dbReference>
<dbReference type="PANTHER" id="PTHR11661">
    <property type="entry name" value="60S RIBOSOMAL PROTEIN L12"/>
    <property type="match status" value="1"/>
</dbReference>
<dbReference type="PANTHER" id="PTHR11661:SF1">
    <property type="entry name" value="LARGE RIBOSOMAL SUBUNIT PROTEIN UL11M"/>
    <property type="match status" value="1"/>
</dbReference>
<dbReference type="Pfam" id="PF00298">
    <property type="entry name" value="Ribosomal_L11"/>
    <property type="match status" value="1"/>
</dbReference>
<dbReference type="Pfam" id="PF03946">
    <property type="entry name" value="Ribosomal_L11_N"/>
    <property type="match status" value="1"/>
</dbReference>
<dbReference type="SMART" id="SM00649">
    <property type="entry name" value="RL11"/>
    <property type="match status" value="1"/>
</dbReference>
<dbReference type="SUPFAM" id="SSF54747">
    <property type="entry name" value="Ribosomal L11/L12e N-terminal domain"/>
    <property type="match status" value="1"/>
</dbReference>
<dbReference type="SUPFAM" id="SSF46906">
    <property type="entry name" value="Ribosomal protein L11, C-terminal domain"/>
    <property type="match status" value="1"/>
</dbReference>
<dbReference type="PROSITE" id="PS00359">
    <property type="entry name" value="RIBOSOMAL_L11"/>
    <property type="match status" value="1"/>
</dbReference>
<proteinExistence type="inferred from homology"/>
<name>RL11_CAMJE</name>
<comment type="function">
    <text evidence="1">Forms part of the ribosomal stalk which helps the ribosome interact with GTP-bound translation factors.</text>
</comment>
<comment type="subunit">
    <text evidence="1">Part of the ribosomal stalk of the 50S ribosomal subunit. Interacts with L10 and the large rRNA to form the base of the stalk. L10 forms an elongated spine to which L12 dimers bind in a sequential fashion forming a multimeric L10(L12)X complex.</text>
</comment>
<comment type="PTM">
    <text evidence="1">One or more lysine residues are methylated.</text>
</comment>
<comment type="similarity">
    <text evidence="1">Belongs to the universal ribosomal protein uL11 family.</text>
</comment>
<protein>
    <recommendedName>
        <fullName evidence="1">Large ribosomal subunit protein uL11</fullName>
    </recommendedName>
    <alternativeName>
        <fullName evidence="2">50S ribosomal protein L11</fullName>
    </alternativeName>
</protein>
<feature type="chain" id="PRO_0000104264" description="Large ribosomal subunit protein uL11">
    <location>
        <begin position="1"/>
        <end position="141"/>
    </location>
</feature>
<reference key="1">
    <citation type="journal article" date="2000" name="Nature">
        <title>The genome sequence of the food-borne pathogen Campylobacter jejuni reveals hypervariable sequences.</title>
        <authorList>
            <person name="Parkhill J."/>
            <person name="Wren B.W."/>
            <person name="Mungall K.L."/>
            <person name="Ketley J.M."/>
            <person name="Churcher C.M."/>
            <person name="Basham D."/>
            <person name="Chillingworth T."/>
            <person name="Davies R.M."/>
            <person name="Feltwell T."/>
            <person name="Holroyd S."/>
            <person name="Jagels K."/>
            <person name="Karlyshev A.V."/>
            <person name="Moule S."/>
            <person name="Pallen M.J."/>
            <person name="Penn C.W."/>
            <person name="Quail M.A."/>
            <person name="Rajandream M.A."/>
            <person name="Rutherford K.M."/>
            <person name="van Vliet A.H.M."/>
            <person name="Whitehead S."/>
            <person name="Barrell B.G."/>
        </authorList>
    </citation>
    <scope>NUCLEOTIDE SEQUENCE [LARGE SCALE GENOMIC DNA]</scope>
    <source>
        <strain>ATCC 700819 / NCTC 11168</strain>
    </source>
</reference>
<keyword id="KW-0488">Methylation</keyword>
<keyword id="KW-1185">Reference proteome</keyword>
<keyword id="KW-0687">Ribonucleoprotein</keyword>
<keyword id="KW-0689">Ribosomal protein</keyword>
<keyword id="KW-0694">RNA-binding</keyword>
<keyword id="KW-0699">rRNA-binding</keyword>
<organism>
    <name type="scientific">Campylobacter jejuni subsp. jejuni serotype O:2 (strain ATCC 700819 / NCTC 11168)</name>
    <dbReference type="NCBI Taxonomy" id="192222"/>
    <lineage>
        <taxon>Bacteria</taxon>
        <taxon>Pseudomonadati</taxon>
        <taxon>Campylobacterota</taxon>
        <taxon>Epsilonproteobacteria</taxon>
        <taxon>Campylobacterales</taxon>
        <taxon>Campylobacteraceae</taxon>
        <taxon>Campylobacter</taxon>
    </lineage>
</organism>
<gene>
    <name evidence="1" type="primary">rplK</name>
    <name type="ordered locus">Cj0474</name>
</gene>